<evidence type="ECO:0000250" key="1">
    <source>
        <dbReference type="UniProtKB" id="P51400"/>
    </source>
</evidence>
<evidence type="ECO:0000255" key="2">
    <source>
        <dbReference type="PROSITE-ProRule" id="PRU00240"/>
    </source>
</evidence>
<evidence type="ECO:0000255" key="3">
    <source>
        <dbReference type="PROSITE-ProRule" id="PRU00266"/>
    </source>
</evidence>
<evidence type="ECO:0000256" key="4">
    <source>
        <dbReference type="SAM" id="MobiDB-lite"/>
    </source>
</evidence>
<evidence type="ECO:0000269" key="5">
    <source>
    </source>
</evidence>
<evidence type="ECO:0000269" key="6">
    <source>
    </source>
</evidence>
<evidence type="ECO:0000269" key="7">
    <source>
    </source>
</evidence>
<evidence type="ECO:0000269" key="8">
    <source>
    </source>
</evidence>
<evidence type="ECO:0000269" key="9">
    <source>
    </source>
</evidence>
<evidence type="ECO:0000269" key="10">
    <source>
    </source>
</evidence>
<evidence type="ECO:0000269" key="11">
    <source>
    </source>
</evidence>
<evidence type="ECO:0000269" key="12">
    <source>
    </source>
</evidence>
<evidence type="ECO:0000303" key="13">
    <source>
    </source>
</evidence>
<evidence type="ECO:0000303" key="14">
    <source>
    </source>
</evidence>
<evidence type="ECO:0000303" key="15">
    <source>
    </source>
</evidence>
<evidence type="ECO:0000303" key="16">
    <source>
    </source>
</evidence>
<evidence type="ECO:0000303" key="17">
    <source>
    </source>
</evidence>
<evidence type="ECO:0000303" key="18">
    <source>
    </source>
</evidence>
<evidence type="ECO:0000303" key="19">
    <source>
    </source>
</evidence>
<evidence type="ECO:0000303" key="20">
    <source>
    </source>
</evidence>
<evidence type="ECO:0000305" key="21"/>
<evidence type="ECO:0000305" key="22">
    <source>
    </source>
</evidence>
<evidence type="ECO:0000312" key="23">
    <source>
        <dbReference type="HGNC" id="HGNC:226"/>
    </source>
</evidence>
<evidence type="ECO:0007744" key="24">
    <source>
    </source>
</evidence>
<evidence type="ECO:0007744" key="25">
    <source>
    </source>
</evidence>
<evidence type="ECO:0007829" key="26">
    <source>
        <dbReference type="PDB" id="1ZY7"/>
    </source>
</evidence>
<evidence type="ECO:0007829" key="27">
    <source>
        <dbReference type="PDB" id="5ED1"/>
    </source>
</evidence>
<evidence type="ECO:0007829" key="28">
    <source>
        <dbReference type="PDB" id="6VFF"/>
    </source>
</evidence>
<evidence type="ECO:0007829" key="29">
    <source>
        <dbReference type="PDB" id="7KFN"/>
    </source>
</evidence>
<evidence type="ECO:0007829" key="30">
    <source>
        <dbReference type="PDB" id="8E0F"/>
    </source>
</evidence>
<feature type="chain" id="PRO_0000171779" description="Double-stranded RNA-specific editase 1">
    <location>
        <begin position="1"/>
        <end position="741"/>
    </location>
</feature>
<feature type="domain" description="DRBM 1" evidence="3">
    <location>
        <begin position="78"/>
        <end position="144"/>
    </location>
</feature>
<feature type="domain" description="DRBM 2" evidence="3">
    <location>
        <begin position="231"/>
        <end position="298"/>
    </location>
</feature>
<feature type="domain" description="A to I editase" evidence="2">
    <location>
        <begin position="370"/>
        <end position="737"/>
    </location>
</feature>
<feature type="region of interest" description="Disordered" evidence="4">
    <location>
        <begin position="1"/>
        <end position="79"/>
    </location>
</feature>
<feature type="region of interest" description="Interaction with substrate RNA" evidence="1">
    <location>
        <begin position="83"/>
        <end position="88"/>
    </location>
</feature>
<feature type="region of interest" description="Interaction with substrate RNA" evidence="1">
    <location>
        <begin position="104"/>
        <end position="105"/>
    </location>
</feature>
<feature type="region of interest" description="Interaction with substrate RNA" evidence="1">
    <location>
        <begin position="237"/>
        <end position="242"/>
    </location>
</feature>
<feature type="region of interest" description="Interaction with substrate RNA" evidence="1">
    <location>
        <position position="259"/>
    </location>
</feature>
<feature type="region of interest" description="Disordered" evidence="4">
    <location>
        <begin position="486"/>
        <end position="518"/>
    </location>
</feature>
<feature type="compositionally biased region" description="Gly residues" evidence="4">
    <location>
        <begin position="33"/>
        <end position="49"/>
    </location>
</feature>
<feature type="compositionally biased region" description="Basic residues" evidence="4">
    <location>
        <begin position="63"/>
        <end position="73"/>
    </location>
</feature>
<feature type="compositionally biased region" description="Polar residues" evidence="4">
    <location>
        <begin position="493"/>
        <end position="503"/>
    </location>
</feature>
<feature type="active site" description="Proton donor" evidence="6">
    <location>
        <position position="396"/>
    </location>
</feature>
<feature type="binding site" evidence="6">
    <location>
        <position position="394"/>
    </location>
    <ligand>
        <name>Zn(2+)</name>
        <dbReference type="ChEBI" id="CHEBI:29105"/>
    </ligand>
</feature>
<feature type="binding site" evidence="6">
    <location>
        <position position="400"/>
    </location>
    <ligand>
        <name>1D-myo-inositol hexakisphosphate</name>
        <dbReference type="ChEBI" id="CHEBI:58130"/>
    </ligand>
</feature>
<feature type="binding site" evidence="6">
    <location>
        <position position="401"/>
    </location>
    <ligand>
        <name>1D-myo-inositol hexakisphosphate</name>
        <dbReference type="ChEBI" id="CHEBI:58130"/>
    </ligand>
</feature>
<feature type="binding site" evidence="6">
    <location>
        <position position="451"/>
    </location>
    <ligand>
        <name>Zn(2+)</name>
        <dbReference type="ChEBI" id="CHEBI:29105"/>
    </ligand>
</feature>
<feature type="binding site" evidence="6">
    <location>
        <position position="556"/>
    </location>
    <ligand>
        <name>Zn(2+)</name>
        <dbReference type="ChEBI" id="CHEBI:29105"/>
    </ligand>
</feature>
<feature type="binding site" evidence="6">
    <location>
        <position position="559"/>
    </location>
    <ligand>
        <name>1D-myo-inositol hexakisphosphate</name>
        <dbReference type="ChEBI" id="CHEBI:58130"/>
    </ligand>
</feature>
<feature type="binding site" evidence="6">
    <location>
        <position position="562"/>
    </location>
    <ligand>
        <name>1D-myo-inositol hexakisphosphate</name>
        <dbReference type="ChEBI" id="CHEBI:58130"/>
    </ligand>
</feature>
<feature type="binding site" evidence="6">
    <location>
        <position position="669"/>
    </location>
    <ligand>
        <name>1D-myo-inositol hexakisphosphate</name>
        <dbReference type="ChEBI" id="CHEBI:58130"/>
    </ligand>
</feature>
<feature type="binding site" evidence="6">
    <location>
        <position position="702"/>
    </location>
    <ligand>
        <name>1D-myo-inositol hexakisphosphate</name>
        <dbReference type="ChEBI" id="CHEBI:58130"/>
    </ligand>
</feature>
<feature type="binding site" evidence="6">
    <location>
        <position position="712"/>
    </location>
    <ligand>
        <name>1D-myo-inositol hexakisphosphate</name>
        <dbReference type="ChEBI" id="CHEBI:58130"/>
    </ligand>
</feature>
<feature type="binding site" evidence="6">
    <location>
        <position position="730"/>
    </location>
    <ligand>
        <name>1D-myo-inositol hexakisphosphate</name>
        <dbReference type="ChEBI" id="CHEBI:58130"/>
    </ligand>
</feature>
<feature type="modified residue" description="Phosphoserine" evidence="24">
    <location>
        <position position="26"/>
    </location>
</feature>
<feature type="modified residue" description="Phosphoserine" evidence="25">
    <location>
        <position position="149"/>
    </location>
</feature>
<feature type="splice variant" id="VSP_019597" description="In isoform 4." evidence="13">
    <original>M</original>
    <variation>MKIPRMKTPCQPDRNSLRQSRNPQKYFAM</variation>
    <location>
        <position position="1"/>
    </location>
</feature>
<feature type="splice variant" id="VSP_041421" description="In isoform 5." evidence="16">
    <original>M</original>
    <variation>MASSTTPPLHMGTFFSVMGRRYKRRRKKRSERKDRNSLRQSRNPQKYFAM</variation>
    <location>
        <position position="1"/>
    </location>
</feature>
<feature type="splice variant" id="VSP_000865" description="In isoform 2, isoform 4 and isoform 6." evidence="13 14 15 18 19 20">
    <location>
        <begin position="466"/>
        <end position="505"/>
    </location>
</feature>
<feature type="splice variant" id="VSP_000866" description="In isoform 3 and isoform 6." evidence="15 18">
    <original>ARLFTAFIKAGLGAWVEKPTEQDQFSLTP</original>
    <variation>VH</variation>
    <location>
        <begin position="713"/>
        <end position="741"/>
    </location>
</feature>
<feature type="sequence variant" id="VAR_083947" description="In NEDHYMS; uncertain significance; mild decreased editing activity." evidence="11">
    <original>K</original>
    <variation>E</variation>
    <location>
        <position position="127"/>
    </location>
</feature>
<feature type="sequence variant" id="VAR_070931" description="In dbSNP:rs199697177." evidence="5">
    <original>V</original>
    <variation>A</variation>
    <location>
        <position position="224"/>
    </location>
</feature>
<feature type="sequence variant" id="VAR_083948" description="In NEDHYMS; uncertain significance; mild decreased editing activity." evidence="11">
    <original>K</original>
    <variation>N</variation>
    <location>
        <position position="367"/>
    </location>
</feature>
<feature type="sequence variant" id="VAR_083949" description="In NEDHYMS; uncertain significance; altered ratio of alternative splicing." evidence="11">
    <original>T</original>
    <variation>A</variation>
    <location>
        <position position="498"/>
    </location>
</feature>
<feature type="sequence variant" id="VAR_083950" description="In NEDHYMS; decreased protein stability; strong decreased editing activity." evidence="11">
    <original>R</original>
    <variation>Q</variation>
    <location>
        <position position="603"/>
    </location>
</feature>
<feature type="sequence variant" id="VAR_083951" description="In NEDHYMS; uncertain significance; mild decreased editing activity." evidence="11">
    <original>A</original>
    <variation>V</variation>
    <location>
        <position position="722"/>
    </location>
</feature>
<feature type="sequence conflict" description="In Ref. 4; AAB58300 and 5; AAM83100/AAM97654/AAN10291." evidence="21" ref="4 5">
    <original>G</original>
    <variation>A</variation>
    <location>
        <position position="30"/>
    </location>
</feature>
<feature type="sequence conflict" description="In Ref. 4; AAB58300 and 5; AAM83100/AAM97654/AAN10291." evidence="21" ref="4 5">
    <original>R</original>
    <variation>E</variation>
    <location>
        <position position="423"/>
    </location>
</feature>
<feature type="sequence conflict" description="In Ref. 5; AAM83100/AAN10291." evidence="21" ref="5">
    <original>V</original>
    <variation>L</variation>
    <location>
        <position position="475"/>
    </location>
</feature>
<feature type="helix" evidence="30">
    <location>
        <begin position="236"/>
        <end position="243"/>
    </location>
</feature>
<feature type="strand" evidence="28">
    <location>
        <begin position="250"/>
        <end position="257"/>
    </location>
</feature>
<feature type="helix" evidence="30">
    <location>
        <begin position="258"/>
        <end position="260"/>
    </location>
</feature>
<feature type="strand" evidence="30">
    <location>
        <begin position="262"/>
        <end position="269"/>
    </location>
</feature>
<feature type="strand" evidence="30">
    <location>
        <begin position="272"/>
        <end position="280"/>
    </location>
</feature>
<feature type="helix" evidence="30">
    <location>
        <begin position="281"/>
        <end position="296"/>
    </location>
</feature>
<feature type="turn" evidence="28">
    <location>
        <begin position="304"/>
        <end position="307"/>
    </location>
</feature>
<feature type="strand" evidence="27">
    <location>
        <begin position="313"/>
        <end position="315"/>
    </location>
</feature>
<feature type="helix" evidence="26">
    <location>
        <begin position="320"/>
        <end position="338"/>
    </location>
</feature>
<feature type="turn" evidence="26">
    <location>
        <begin position="339"/>
        <end position="343"/>
    </location>
</feature>
<feature type="helix" evidence="26">
    <location>
        <begin position="345"/>
        <end position="347"/>
    </location>
</feature>
<feature type="strand" evidence="26">
    <location>
        <begin position="352"/>
        <end position="361"/>
    </location>
</feature>
<feature type="helix" evidence="26">
    <location>
        <begin position="363"/>
        <end position="365"/>
    </location>
</feature>
<feature type="strand" evidence="26">
    <location>
        <begin position="367"/>
        <end position="373"/>
    </location>
</feature>
<feature type="strand" evidence="28">
    <location>
        <begin position="375"/>
        <end position="377"/>
    </location>
</feature>
<feature type="helix" evidence="26">
    <location>
        <begin position="380"/>
        <end position="382"/>
    </location>
</feature>
<feature type="strand" evidence="28">
    <location>
        <begin position="391"/>
        <end position="394"/>
    </location>
</feature>
<feature type="helix" evidence="26">
    <location>
        <begin position="395"/>
        <end position="416"/>
    </location>
</feature>
<feature type="helix" evidence="26">
    <location>
        <begin position="418"/>
        <end position="423"/>
    </location>
</feature>
<feature type="strand" evidence="26">
    <location>
        <begin position="425"/>
        <end position="428"/>
    </location>
</feature>
<feature type="strand" evidence="26">
    <location>
        <begin position="432"/>
        <end position="436"/>
    </location>
</feature>
<feature type="strand" evidence="26">
    <location>
        <begin position="440"/>
        <end position="448"/>
    </location>
</feature>
<feature type="helix" evidence="26">
    <location>
        <begin position="453"/>
        <end position="456"/>
    </location>
</feature>
<feature type="turn" evidence="29">
    <location>
        <begin position="515"/>
        <end position="518"/>
    </location>
</feature>
<feature type="strand" evidence="26">
    <location>
        <begin position="521"/>
        <end position="524"/>
    </location>
</feature>
<feature type="strand" evidence="29">
    <location>
        <begin position="527"/>
        <end position="532"/>
    </location>
</feature>
<feature type="strand" evidence="29">
    <location>
        <begin position="535"/>
        <end position="537"/>
    </location>
</feature>
<feature type="helix" evidence="26">
    <location>
        <begin position="542"/>
        <end position="546"/>
    </location>
</feature>
<feature type="strand" evidence="26">
    <location>
        <begin position="552"/>
        <end position="554"/>
    </location>
</feature>
<feature type="helix" evidence="26">
    <location>
        <begin position="556"/>
        <end position="566"/>
    </location>
</feature>
<feature type="helix" evidence="26">
    <location>
        <begin position="570"/>
        <end position="574"/>
    </location>
</feature>
<feature type="strand" evidence="26">
    <location>
        <begin position="582"/>
        <end position="589"/>
    </location>
</feature>
<feature type="helix" evidence="26">
    <location>
        <begin position="593"/>
        <end position="600"/>
    </location>
</feature>
<feature type="helix" evidence="26">
    <location>
        <begin position="602"/>
        <end position="604"/>
    </location>
</feature>
<feature type="strand" evidence="26">
    <location>
        <begin position="620"/>
        <end position="623"/>
    </location>
</feature>
<feature type="strand" evidence="26">
    <location>
        <begin position="637"/>
        <end position="643"/>
    </location>
</feature>
<feature type="strand" evidence="26">
    <location>
        <begin position="650"/>
        <end position="653"/>
    </location>
</feature>
<feature type="turn" evidence="26">
    <location>
        <begin position="654"/>
        <end position="657"/>
    </location>
</feature>
<feature type="helix" evidence="26">
    <location>
        <begin position="669"/>
        <end position="680"/>
    </location>
</feature>
<feature type="helix" evidence="26">
    <location>
        <begin position="685"/>
        <end position="687"/>
    </location>
</feature>
<feature type="helix" evidence="26">
    <location>
        <begin position="698"/>
        <end position="703"/>
    </location>
</feature>
<feature type="helix" evidence="26">
    <location>
        <begin position="706"/>
        <end position="721"/>
    </location>
</feature>
<feature type="helix" evidence="26">
    <location>
        <begin position="732"/>
        <end position="735"/>
    </location>
</feature>
<reference key="1">
    <citation type="journal article" date="1997" name="RNA">
        <title>Two forms of human double-stranded RNA-specific editase 1 (hRED1) generated by the insertion of an Alu cassette.</title>
        <authorList>
            <person name="Gerber A."/>
            <person name="O'Connell M.A."/>
            <person name="Keller W."/>
        </authorList>
    </citation>
    <scope>NUCLEOTIDE SEQUENCE [MRNA] (ISOFORMS 1 AND 2)</scope>
    <scope>TISSUE SPECIFICITY</scope>
    <scope>CATALYTIC ACTIVITY</scope>
    <source>
        <tissue>Brain</tissue>
    </source>
</reference>
<reference key="2">
    <citation type="journal article" date="1997" name="Genomics">
        <title>Cloning of a human RNA editing deaminase (ADARB1) of glutamate receptors that maps to chromosome 21q22.3.</title>
        <authorList>
            <person name="Mittaz L."/>
            <person name="Scott H.S."/>
            <person name="Rossier C."/>
            <person name="Seeburg P.H."/>
            <person name="Higuchi M."/>
            <person name="Antonarakis S.E."/>
        </authorList>
    </citation>
    <scope>NUCLEOTIDE SEQUENCE [MRNA] (ISOFORMS 1 AND 2)</scope>
    <source>
        <tissue>Fetal brain</tissue>
    </source>
</reference>
<reference key="3">
    <citation type="journal article" date="1997" name="Mol. Cell. Biol.">
        <title>Editing of glutamate receptor B subunit ion channel RNAs by four alternatively spliced DRADA2 double-stranded RNA adenosine deaminases.</title>
        <authorList>
            <person name="Lai F."/>
            <person name="Chen C.-X."/>
            <person name="Carter K.C."/>
            <person name="Nishikura K."/>
        </authorList>
    </citation>
    <scope>NUCLEOTIDE SEQUENCE [MRNA] (ISOFORMS 1; 2 AND 3)</scope>
</reference>
<reference key="4">
    <citation type="journal article" date="1997" name="Somat. Cell Mol. Genet.">
        <title>Map location, genomic organization and expression patterns of the human RED1 RNA editase.</title>
        <authorList>
            <person name="Villard L."/>
            <person name="Tassone F."/>
            <person name="Haymowicz M."/>
            <person name="Welborn R."/>
            <person name="Gardiner K."/>
        </authorList>
    </citation>
    <scope>NUCLEOTIDE SEQUENCE [MRNA] (ISOFORM 1)</scope>
</reference>
<reference key="5">
    <citation type="journal article" date="2002" name="Gene">
        <title>Phylogenetic comparison of the pre-mRNA adenosine deaminase ADAR2 genes and transcripts: conservation and diversity in editing site sequence and alternative splicing patterns.</title>
        <authorList>
            <person name="Slavov D."/>
            <person name="Gardiner K."/>
        </authorList>
    </citation>
    <scope>NUCLEOTIDE SEQUENCE [MRNA] (ISOFORMS 2 AND 4)</scope>
</reference>
<reference key="6">
    <citation type="journal article" date="2005" name="Gene">
        <title>Novel splice variants of human ADAR2 mRNA: skipping of the exon encoding the dsRNA-binding domains, and multiple C-terminal splice sites.</title>
        <authorList>
            <person name="Kawahara Y."/>
            <person name="Ito K."/>
            <person name="Ito M."/>
            <person name="Tsuji S."/>
            <person name="Kwak S."/>
        </authorList>
    </citation>
    <scope>NUCLEOTIDE SEQUENCE [MRNA] (ISOFORMS 2 AND 6)</scope>
</reference>
<reference key="7">
    <citation type="journal article" date="2000" name="Nature">
        <title>The DNA sequence of human chromosome 21.</title>
        <authorList>
            <person name="Hattori M."/>
            <person name="Fujiyama A."/>
            <person name="Taylor T.D."/>
            <person name="Watanabe H."/>
            <person name="Yada T."/>
            <person name="Park H.-S."/>
            <person name="Toyoda A."/>
            <person name="Ishii K."/>
            <person name="Totoki Y."/>
            <person name="Choi D.-K."/>
            <person name="Groner Y."/>
            <person name="Soeda E."/>
            <person name="Ohki M."/>
            <person name="Takagi T."/>
            <person name="Sakaki Y."/>
            <person name="Taudien S."/>
            <person name="Blechschmidt K."/>
            <person name="Polley A."/>
            <person name="Menzel U."/>
            <person name="Delabar J."/>
            <person name="Kumpf K."/>
            <person name="Lehmann R."/>
            <person name="Patterson D."/>
            <person name="Reichwald K."/>
            <person name="Rump A."/>
            <person name="Schillhabel M."/>
            <person name="Schudy A."/>
            <person name="Zimmermann W."/>
            <person name="Rosenthal A."/>
            <person name="Kudoh J."/>
            <person name="Shibuya K."/>
            <person name="Kawasaki K."/>
            <person name="Asakawa S."/>
            <person name="Shintani A."/>
            <person name="Sasaki T."/>
            <person name="Nagamine K."/>
            <person name="Mitsuyama S."/>
            <person name="Antonarakis S.E."/>
            <person name="Minoshima S."/>
            <person name="Shimizu N."/>
            <person name="Nordsiek G."/>
            <person name="Hornischer K."/>
            <person name="Brandt P."/>
            <person name="Scharfe M."/>
            <person name="Schoen O."/>
            <person name="Desario A."/>
            <person name="Reichelt J."/>
            <person name="Kauer G."/>
            <person name="Bloecker H."/>
            <person name="Ramser J."/>
            <person name="Beck A."/>
            <person name="Klages S."/>
            <person name="Hennig S."/>
            <person name="Riesselmann L."/>
            <person name="Dagand E."/>
            <person name="Wehrmeyer S."/>
            <person name="Borzym K."/>
            <person name="Gardiner K."/>
            <person name="Nizetic D."/>
            <person name="Francis F."/>
            <person name="Lehrach H."/>
            <person name="Reinhardt R."/>
            <person name="Yaspo M.-L."/>
        </authorList>
    </citation>
    <scope>NUCLEOTIDE SEQUENCE [LARGE SCALE GENOMIC DNA]</scope>
</reference>
<reference key="8">
    <citation type="submission" date="2005-09" db="EMBL/GenBank/DDBJ databases">
        <authorList>
            <person name="Mural R.J."/>
            <person name="Istrail S."/>
            <person name="Sutton G.G."/>
            <person name="Florea L."/>
            <person name="Halpern A.L."/>
            <person name="Mobarry C.M."/>
            <person name="Lippert R."/>
            <person name="Walenz B."/>
            <person name="Shatkay H."/>
            <person name="Dew I."/>
            <person name="Miller J.R."/>
            <person name="Flanigan M.J."/>
            <person name="Edwards N.J."/>
            <person name="Bolanos R."/>
            <person name="Fasulo D."/>
            <person name="Halldorsson B.V."/>
            <person name="Hannenhalli S."/>
            <person name="Turner R."/>
            <person name="Yooseph S."/>
            <person name="Lu F."/>
            <person name="Nusskern D.R."/>
            <person name="Shue B.C."/>
            <person name="Zheng X.H."/>
            <person name="Zhong F."/>
            <person name="Delcher A.L."/>
            <person name="Huson D.H."/>
            <person name="Kravitz S.A."/>
            <person name="Mouchard L."/>
            <person name="Reinert K."/>
            <person name="Remington K.A."/>
            <person name="Clark A.G."/>
            <person name="Waterman M.S."/>
            <person name="Eichler E.E."/>
            <person name="Adams M.D."/>
            <person name="Hunkapiller M.W."/>
            <person name="Myers E.W."/>
            <person name="Venter J.C."/>
        </authorList>
    </citation>
    <scope>NUCLEOTIDE SEQUENCE [LARGE SCALE GENOMIC DNA]</scope>
</reference>
<reference key="9">
    <citation type="journal article" date="2004" name="Genome Res.">
        <title>The status, quality, and expansion of the NIH full-length cDNA project: the Mammalian Gene Collection (MGC).</title>
        <authorList>
            <consortium name="The MGC Project Team"/>
        </authorList>
    </citation>
    <scope>NUCLEOTIDE SEQUENCE [LARGE SCALE MRNA] (ISOFORM 2)</scope>
    <scope>VARIANT ALA-224</scope>
    <source>
        <tissue>Testis</tissue>
    </source>
</reference>
<reference key="10">
    <citation type="journal article" date="2009" name="PLoS ONE">
        <title>Novel exon of mammalian ADAR2 extends open reading frame.</title>
        <authorList>
            <person name="Maas S."/>
            <person name="Gommans W.M."/>
        </authorList>
    </citation>
    <scope>NUCLEOTIDE SEQUENCE [MRNA] OF 1-75 (ISOFORM 5)</scope>
    <scope>ALTERNATIVE PROMOTER USAGE</scope>
    <scope>TISSUE SPECIFICITY</scope>
</reference>
<reference key="11">
    <citation type="journal article" date="2004" name="Genome Biol.">
        <title>An unappreciated role for RNA surveillance.</title>
        <authorList>
            <person name="Hillman R.T."/>
            <person name="Green R.E."/>
            <person name="Brenner S.E."/>
        </authorList>
    </citation>
    <scope>SPLICE ISOFORM(S) THAT ARE POTENTIAL NMD TARGET(S)</scope>
</reference>
<reference key="12">
    <citation type="journal article" date="2008" name="J. Biol. Chem.">
        <title>Down-regulation of RNA editing in pediatric astrocytomas: ADAR2 editing activity inhibits cell migration and proliferation.</title>
        <authorList>
            <person name="Cenci C."/>
            <person name="Barzotti R."/>
            <person name="Galeano F."/>
            <person name="Corbelli S."/>
            <person name="Rota R."/>
            <person name="Massimi L."/>
            <person name="Di Rocco C."/>
            <person name="O'Connell M.A."/>
            <person name="Gallo A."/>
        </authorList>
    </citation>
    <scope>FUNCTION</scope>
    <scope>SUBUNIT</scope>
    <scope>SUBCELLULAR LOCATION</scope>
    <scope>TISSUE SPECIFICITY</scope>
</reference>
<reference key="13">
    <citation type="journal article" date="2008" name="Proc. Natl. Acad. Sci. U.S.A.">
        <title>A quantitative atlas of mitotic phosphorylation.</title>
        <authorList>
            <person name="Dephoure N."/>
            <person name="Zhou C."/>
            <person name="Villen J."/>
            <person name="Beausoleil S.A."/>
            <person name="Bakalarski C.E."/>
            <person name="Elledge S.J."/>
            <person name="Gygi S.P."/>
        </authorList>
    </citation>
    <scope>IDENTIFICATION BY MASS SPECTROMETRY [LARGE SCALE ANALYSIS]</scope>
    <source>
        <tissue>Cervix carcinoma</tissue>
    </source>
</reference>
<reference key="14">
    <citation type="journal article" date="2009" name="Sci. Signal.">
        <title>Quantitative phosphoproteomic analysis of T cell receptor signaling reveals system-wide modulation of protein-protein interactions.</title>
        <authorList>
            <person name="Mayya V."/>
            <person name="Lundgren D.H."/>
            <person name="Hwang S.-I."/>
            <person name="Rezaul K."/>
            <person name="Wu L."/>
            <person name="Eng J.K."/>
            <person name="Rodionov V."/>
            <person name="Han D.K."/>
        </authorList>
    </citation>
    <scope>IDENTIFICATION BY MASS SPECTROMETRY [LARGE SCALE ANALYSIS]</scope>
    <source>
        <tissue>Leukemic T-cell</tissue>
    </source>
</reference>
<reference key="15">
    <citation type="journal article" date="2010" name="Annu. Rev. Biochem.">
        <title>Functions and regulation of RNA editing by ADAR deaminases.</title>
        <authorList>
            <person name="Nishikura K."/>
        </authorList>
    </citation>
    <scope>REVIEW</scope>
</reference>
<reference key="16">
    <citation type="journal article" date="2010" name="Int. J. Cancer">
        <title>Human BLCAP transcript: new editing events in normal and cancerous tissues.</title>
        <authorList>
            <person name="Galeano F."/>
            <person name="Leroy A."/>
            <person name="Rossetti C."/>
            <person name="Gromova I."/>
            <person name="Gautier P."/>
            <person name="Keegan L.P."/>
            <person name="Massimi L."/>
            <person name="Di Rocco C."/>
            <person name="O'Connell M.A."/>
            <person name="Gallo A."/>
        </authorList>
    </citation>
    <scope>FUNCTION</scope>
</reference>
<reference key="17">
    <citation type="journal article" date="2010" name="Sci. Signal.">
        <title>Quantitative phosphoproteomics reveals widespread full phosphorylation site occupancy during mitosis.</title>
        <authorList>
            <person name="Olsen J.V."/>
            <person name="Vermeulen M."/>
            <person name="Santamaria A."/>
            <person name="Kumar C."/>
            <person name="Miller M.L."/>
            <person name="Jensen L.J."/>
            <person name="Gnad F."/>
            <person name="Cox J."/>
            <person name="Jensen T.S."/>
            <person name="Nigg E.A."/>
            <person name="Brunak S."/>
            <person name="Mann M."/>
        </authorList>
    </citation>
    <scope>PHOSPHORYLATION [LARGE SCALE ANALYSIS] AT SER-26</scope>
    <scope>IDENTIFICATION BY MASS SPECTROMETRY [LARGE SCALE ANALYSIS]</scope>
    <source>
        <tissue>Cervix carcinoma</tissue>
    </source>
</reference>
<reference key="18">
    <citation type="journal article" date="2011" name="Biochemistry (Mosc.)">
        <title>RNA editing catalyzed by ADAR1 and its function in mammalian cells.</title>
        <authorList>
            <person name="Wang Q."/>
        </authorList>
    </citation>
    <scope>REVIEW</scope>
</reference>
<reference key="19">
    <citation type="journal article" date="2011" name="J. Gen. Virol.">
        <title>ADAR2 editing enzyme is a novel human immunodeficiency virus-1 proviral factor.</title>
        <authorList>
            <person name="Doria M."/>
            <person name="Tomaselli S."/>
            <person name="Neri F."/>
            <person name="Ciafre S.A."/>
            <person name="Farace M.G."/>
            <person name="Michienzi A."/>
            <person name="Gallo A."/>
        </authorList>
    </citation>
    <scope>FUNCTION</scope>
</reference>
<reference key="20">
    <citation type="journal article" date="2011" name="J. Interferon Cytokine Res.">
        <title>Adenosine deaminases acting on RNA, RNA editing, and interferon action.</title>
        <authorList>
            <person name="George C.X."/>
            <person name="Gan Z."/>
            <person name="Liu Y."/>
            <person name="Samuel C.E."/>
        </authorList>
    </citation>
    <scope>REVIEW</scope>
</reference>
<reference key="21">
    <citation type="journal article" date="2011" name="Virology">
        <title>Adenosine deaminases acting on RNA (ADARs) are both antiviral and proviral.</title>
        <authorList>
            <person name="Samuel C.E."/>
        </authorList>
    </citation>
    <scope>REVIEW</scope>
</reference>
<reference key="22">
    <citation type="journal article" date="2012" name="Crit. Rev. Biochem. Mol. Biol.">
        <title>A-to-I editing of protein coding and noncoding RNAs.</title>
        <authorList>
            <person name="Mallela A."/>
            <person name="Nishikura K."/>
        </authorList>
    </citation>
    <scope>REVIEW</scope>
</reference>
<reference key="23">
    <citation type="journal article" date="2012" name="Curr. Top. Microbiol. Immunol.">
        <title>ADAR proteins: structure and catalytic mechanism.</title>
        <authorList>
            <person name="Goodman R.A."/>
            <person name="Macbeth M.R."/>
            <person name="Beal P.A."/>
        </authorList>
    </citation>
    <scope>REVIEW</scope>
</reference>
<reference key="24">
    <citation type="journal article" date="2012" name="Mol. Neurobiol.">
        <title>Activity regulation of adenosine deaminases acting on RNA (ADARs).</title>
        <authorList>
            <person name="Orlandi C."/>
            <person name="Barbon A."/>
            <person name="Barlati S."/>
        </authorList>
    </citation>
    <scope>REVIEW</scope>
</reference>
<reference key="25">
    <citation type="journal article" date="2013" name="J. Proteome Res.">
        <title>Toward a comprehensive characterization of a human cancer cell phosphoproteome.</title>
        <authorList>
            <person name="Zhou H."/>
            <person name="Di Palma S."/>
            <person name="Preisinger C."/>
            <person name="Peng M."/>
            <person name="Polat A.N."/>
            <person name="Heck A.J."/>
            <person name="Mohammed S."/>
        </authorList>
    </citation>
    <scope>PHOSPHORYLATION [LARGE SCALE ANALYSIS] AT SER-149</scope>
    <scope>IDENTIFICATION BY MASS SPECTROMETRY [LARGE SCALE ANALYSIS]</scope>
    <source>
        <tissue>Erythroleukemia</tissue>
    </source>
</reference>
<reference key="26">
    <citation type="journal article" date="2005" name="Science">
        <title>Inositol hexakisphosphate is bound in the ADAR2 core and required for RNA editing.</title>
        <authorList>
            <person name="Macbeth M.R."/>
            <person name="Schubert H.L."/>
            <person name="Vandemark A.P."/>
            <person name="Lingam A.T."/>
            <person name="Hill C.P."/>
            <person name="Bass B.L."/>
        </authorList>
    </citation>
    <scope>X-RAY CRYSTALLOGRAPHY (1.7 ANGSTROMS) OF 299-741 IN COMPLEX WITH IP6 AND ZINC</scope>
    <scope>CATALYTIC ACTIVITY</scope>
</reference>
<reference key="27">
    <citation type="journal article" date="2020" name="Am. J. Hum. Genet.">
        <title>Bi-allelic ADARB1 Variants Associated with Microcephaly, Intellectual Disability, and Seizures.</title>
        <authorList>
            <person name="Tan T.Y."/>
            <person name="Sedmik J."/>
            <person name="Fitzgerald M.P."/>
            <person name="Halevy R.S."/>
            <person name="Keegan L.P."/>
            <person name="Helbig I."/>
            <person name="Basel-Salmon L."/>
            <person name="Cohen L."/>
            <person name="Straussberg R."/>
            <person name="Chung W.K."/>
            <person name="Helal M."/>
            <person name="Maroofian R."/>
            <person name="Houlden H."/>
            <person name="Juusola J."/>
            <person name="Sadedin S."/>
            <person name="Pais L."/>
            <person name="Howell K.B."/>
            <person name="White S.M."/>
            <person name="Christodoulou J."/>
            <person name="O'Connell M.A."/>
        </authorList>
    </citation>
    <scope>INVOLVEMENT IN NEDHYMS</scope>
    <scope>FUNCTION</scope>
    <scope>CATALYTIC ACTIVITY</scope>
    <scope>VARIANTS NEDHYMS GLU-127; ASN-367; ALA-498; GLN-603 AND VAL-722</scope>
    <scope>CHARACTERIZATION OF VARIANTS NEDHYMS GLU-127; ASN-367; ALA-498; GLN-603 AND VAL-722</scope>
    <scope>SUBCELLULAR LOCATION</scope>
</reference>
<name>RED1_HUMAN</name>
<sequence>MDIEDEENMSSSSTDVKENRNLDNVSPKDGSTPGPGEGSQLSNGGGGGPGRKRPLEEGSNGHSKYRLKKRRKTPGPVLPKNALMQLNEIKPGLQYTLLSQTGPVHAPLFVMSVEVNGQVFEGSGPTKKKAKLHAAEKALRSFVQFPNASEAHLAMGRTLSVNTDFTSDQADFPDTLFNGFETPDKAEPPFYVGSNGDDSFSSSGDLSLSASPVPASLAQPPLPVLPPFPPPSGKNPVMILNELRPGLKYDFLSESGESHAKSFVMSVVVDGQFFEGSGRNKKLAKARAAQSALAAIFNLHLDQTPSRQPIPSEGLQLHLPQVLADAVSRLVLGKFGDLTDNFSSPHARRKVLAGVVMTTGTDVKDAKVISVSTGTKCINGEYMSDRGLALNDCHAEIISRRSLLRFLYTQLELYLNNKDDQKRSIFQKSERGGFRLKENVQFHLYISTSPCGDARIFSPHEPILEGSRSYTQAGVQWCNHGSLQPRPPGLLSDPSTSTFQGAGTTEPADRHPNRKARGQLRTKIESGEGTIPVRSNASIQTWDGVLQGERLLTMSCSDKIARWNVVGIQGSLLSIFVEPIYFSSIILGSLYHGDHLSRAMYQRISNIEDLPPLYTLNKPLLSGISNAEARQPGKAPNFSVNWTVGDSAIEVINATTGKDELGRASRLCKHALYCRWMRVHGKVPSHLLRSKITKPNVYHESKLAAKEYQAAKARLFTAFIKAGLGAWVEKPTEQDQFSLTP</sequence>
<dbReference type="EC" id="3.5.4.37" evidence="6 12"/>
<dbReference type="EMBL" id="U82120">
    <property type="protein sequence ID" value="AAB61686.1"/>
    <property type="molecule type" value="mRNA"/>
</dbReference>
<dbReference type="EMBL" id="U82121">
    <property type="protein sequence ID" value="AAB61687.1"/>
    <property type="molecule type" value="mRNA"/>
</dbReference>
<dbReference type="EMBL" id="X99227">
    <property type="protein sequence ID" value="CAA67611.1"/>
    <property type="molecule type" value="mRNA"/>
</dbReference>
<dbReference type="EMBL" id="X99383">
    <property type="protein sequence ID" value="CAA67762.1"/>
    <property type="molecule type" value="mRNA"/>
</dbReference>
<dbReference type="EMBL" id="U76420">
    <property type="protein sequence ID" value="AAC51240.1"/>
    <property type="molecule type" value="mRNA"/>
</dbReference>
<dbReference type="EMBL" id="U76421">
    <property type="protein sequence ID" value="AAC51241.1"/>
    <property type="molecule type" value="mRNA"/>
</dbReference>
<dbReference type="EMBL" id="U76422">
    <property type="protein sequence ID" value="AAC51242.1"/>
    <property type="molecule type" value="mRNA"/>
</dbReference>
<dbReference type="EMBL" id="AF001042">
    <property type="protein sequence ID" value="AAB58300.1"/>
    <property type="molecule type" value="mRNA"/>
</dbReference>
<dbReference type="EMBL" id="AF525422">
    <property type="protein sequence ID" value="AAM83100.1"/>
    <property type="molecule type" value="mRNA"/>
</dbReference>
<dbReference type="EMBL" id="AF533142">
    <property type="protein sequence ID" value="AAM97654.1"/>
    <property type="molecule type" value="mRNA"/>
</dbReference>
<dbReference type="EMBL" id="AY135659">
    <property type="protein sequence ID" value="AAN10291.1"/>
    <property type="molecule type" value="mRNA"/>
</dbReference>
<dbReference type="EMBL" id="AB194370">
    <property type="protein sequence ID" value="BAE16326.1"/>
    <property type="molecule type" value="mRNA"/>
</dbReference>
<dbReference type="EMBL" id="AB194371">
    <property type="protein sequence ID" value="BAE16327.1"/>
    <property type="molecule type" value="mRNA"/>
</dbReference>
<dbReference type="EMBL" id="AB194372">
    <property type="protein sequence ID" value="BAE16328.1"/>
    <property type="molecule type" value="mRNA"/>
</dbReference>
<dbReference type="EMBL" id="AB194373">
    <property type="protein sequence ID" value="BAE16329.1"/>
    <property type="molecule type" value="mRNA"/>
</dbReference>
<dbReference type="EMBL" id="AL163301">
    <property type="protein sequence ID" value="CAB90493.1"/>
    <property type="molecule type" value="Genomic_DNA"/>
</dbReference>
<dbReference type="EMBL" id="AL133499">
    <property type="status" value="NOT_ANNOTATED_CDS"/>
    <property type="molecule type" value="Genomic_DNA"/>
</dbReference>
<dbReference type="EMBL" id="AP001579">
    <property type="status" value="NOT_ANNOTATED_CDS"/>
    <property type="molecule type" value="Genomic_DNA"/>
</dbReference>
<dbReference type="EMBL" id="BX322560">
    <property type="status" value="NOT_ANNOTATED_CDS"/>
    <property type="molecule type" value="Genomic_DNA"/>
</dbReference>
<dbReference type="EMBL" id="CH471079">
    <property type="protein sequence ID" value="EAX09357.1"/>
    <property type="molecule type" value="Genomic_DNA"/>
</dbReference>
<dbReference type="EMBL" id="CH471079">
    <property type="protein sequence ID" value="EAX09359.1"/>
    <property type="molecule type" value="Genomic_DNA"/>
</dbReference>
<dbReference type="EMBL" id="CH471079">
    <property type="protein sequence ID" value="EAX09360.1"/>
    <property type="molecule type" value="Genomic_DNA"/>
</dbReference>
<dbReference type="EMBL" id="BC065545">
    <property type="protein sequence ID" value="AAH65545.1"/>
    <property type="molecule type" value="mRNA"/>
</dbReference>
<dbReference type="EMBL" id="FJ169506">
    <property type="protein sequence ID" value="ACN49027.1"/>
    <property type="status" value="ALT_INIT"/>
    <property type="molecule type" value="mRNA"/>
</dbReference>
<dbReference type="CCDS" id="CCDS33589.1">
    <molecule id="P78563-1"/>
</dbReference>
<dbReference type="CCDS" id="CCDS33590.1">
    <molecule id="P78563-2"/>
</dbReference>
<dbReference type="CCDS" id="CCDS42970.1">
    <molecule id="P78563-3"/>
</dbReference>
<dbReference type="RefSeq" id="NP_001103.1">
    <molecule id="P78563-2"/>
    <property type="nucleotide sequence ID" value="NM_001112.4"/>
</dbReference>
<dbReference type="RefSeq" id="NP_001153702.1">
    <molecule id="P78563-6"/>
    <property type="nucleotide sequence ID" value="NM_001160230.2"/>
</dbReference>
<dbReference type="RefSeq" id="NP_001333616.1">
    <property type="nucleotide sequence ID" value="NM_001346687.1"/>
</dbReference>
<dbReference type="RefSeq" id="NP_001333617.1">
    <molecule id="P78563-6"/>
    <property type="nucleotide sequence ID" value="NM_001346688.2"/>
</dbReference>
<dbReference type="RefSeq" id="NP_056648.1">
    <molecule id="P78563-1"/>
    <property type="nucleotide sequence ID" value="NM_015833.4"/>
</dbReference>
<dbReference type="RefSeq" id="NP_056649.1">
    <molecule id="P78563-3"/>
    <property type="nucleotide sequence ID" value="NM_015834.4"/>
</dbReference>
<dbReference type="RefSeq" id="XP_016883736.1">
    <property type="nucleotide sequence ID" value="XM_017028247.1"/>
</dbReference>
<dbReference type="RefSeq" id="XP_016883737.1">
    <property type="nucleotide sequence ID" value="XM_017028248.1"/>
</dbReference>
<dbReference type="RefSeq" id="XP_016883738.1">
    <property type="nucleotide sequence ID" value="XM_017028249.1"/>
</dbReference>
<dbReference type="RefSeq" id="XP_016883739.1">
    <property type="nucleotide sequence ID" value="XM_017028250.1"/>
</dbReference>
<dbReference type="RefSeq" id="XP_016883740.1">
    <molecule id="P78563-1"/>
    <property type="nucleotide sequence ID" value="XM_017028251.2"/>
</dbReference>
<dbReference type="RefSeq" id="XP_016883743.1">
    <property type="nucleotide sequence ID" value="XM_017028254.1"/>
</dbReference>
<dbReference type="RefSeq" id="XP_016883744.1">
    <property type="nucleotide sequence ID" value="XM_017028255.1"/>
</dbReference>
<dbReference type="RefSeq" id="XP_047296620.1">
    <molecule id="P78563-1"/>
    <property type="nucleotide sequence ID" value="XM_047440664.1"/>
</dbReference>
<dbReference type="RefSeq" id="XP_047296621.1">
    <molecule id="P78563-1"/>
    <property type="nucleotide sequence ID" value="XM_047440665.1"/>
</dbReference>
<dbReference type="RefSeq" id="XP_047296622.1">
    <molecule id="P78563-3"/>
    <property type="nucleotide sequence ID" value="XM_047440666.1"/>
</dbReference>
<dbReference type="RefSeq" id="XP_047296623.1">
    <molecule id="P78563-6"/>
    <property type="nucleotide sequence ID" value="XM_047440667.1"/>
</dbReference>
<dbReference type="RefSeq" id="XP_054180281.1">
    <molecule id="P78563-1"/>
    <property type="nucleotide sequence ID" value="XM_054324306.1"/>
</dbReference>
<dbReference type="RefSeq" id="XP_054180282.1">
    <molecule id="P78563-1"/>
    <property type="nucleotide sequence ID" value="XM_054324307.1"/>
</dbReference>
<dbReference type="RefSeq" id="XP_054180283.1">
    <molecule id="P78563-1"/>
    <property type="nucleotide sequence ID" value="XM_054324308.1"/>
</dbReference>
<dbReference type="RefSeq" id="XP_054180285.1">
    <molecule id="P78563-3"/>
    <property type="nucleotide sequence ID" value="XM_054324310.1"/>
</dbReference>
<dbReference type="RefSeq" id="XP_054180286.1">
    <molecule id="P78563-6"/>
    <property type="nucleotide sequence ID" value="XM_054324311.1"/>
</dbReference>
<dbReference type="PDB" id="1ZY7">
    <property type="method" value="X-ray"/>
    <property type="resolution" value="1.70 A"/>
    <property type="chains" value="A/B=299-741"/>
</dbReference>
<dbReference type="PDB" id="5ED1">
    <property type="method" value="X-ray"/>
    <property type="resolution" value="2.77 A"/>
    <property type="chains" value="A/D=299-741"/>
</dbReference>
<dbReference type="PDB" id="5ED2">
    <property type="method" value="X-ray"/>
    <property type="resolution" value="2.95 A"/>
    <property type="chains" value="A/D=299-741"/>
</dbReference>
<dbReference type="PDB" id="5HP2">
    <property type="method" value="X-ray"/>
    <property type="resolution" value="2.98 A"/>
    <property type="chains" value="A/D=299-741"/>
</dbReference>
<dbReference type="PDB" id="5HP3">
    <property type="method" value="X-ray"/>
    <property type="resolution" value="3.09 A"/>
    <property type="chains" value="A/D=299-741"/>
</dbReference>
<dbReference type="PDB" id="6D06">
    <property type="method" value="X-ray"/>
    <property type="resolution" value="2.55 A"/>
    <property type="chains" value="A/D=299-741"/>
</dbReference>
<dbReference type="PDB" id="6VFF">
    <property type="method" value="X-ray"/>
    <property type="resolution" value="2.80 A"/>
    <property type="chains" value="A/B=215-741"/>
</dbReference>
<dbReference type="PDB" id="7KFN">
    <property type="method" value="X-ray"/>
    <property type="resolution" value="2.50 A"/>
    <property type="chains" value="A/D=299-741"/>
</dbReference>
<dbReference type="PDB" id="8E0F">
    <property type="method" value="X-ray"/>
    <property type="resolution" value="2.70 A"/>
    <property type="chains" value="A/B=215-741"/>
</dbReference>
<dbReference type="PDB" id="8E4X">
    <property type="method" value="X-ray"/>
    <property type="resolution" value="2.80 A"/>
    <property type="chains" value="A/B=215-741"/>
</dbReference>
<dbReference type="PDB" id="9D5J">
    <property type="method" value="X-ray"/>
    <property type="resolution" value="2.80 A"/>
    <property type="chains" value="A/B=215-741"/>
</dbReference>
<dbReference type="PDB" id="9D5K">
    <property type="method" value="X-ray"/>
    <property type="resolution" value="2.70 A"/>
    <property type="chains" value="A/B=215-741"/>
</dbReference>
<dbReference type="PDBsum" id="1ZY7"/>
<dbReference type="PDBsum" id="5ED1"/>
<dbReference type="PDBsum" id="5ED2"/>
<dbReference type="PDBsum" id="5HP2"/>
<dbReference type="PDBsum" id="5HP3"/>
<dbReference type="PDBsum" id="6D06"/>
<dbReference type="PDBsum" id="6VFF"/>
<dbReference type="PDBsum" id="7KFN"/>
<dbReference type="PDBsum" id="8E0F"/>
<dbReference type="PDBsum" id="8E4X"/>
<dbReference type="PDBsum" id="9D5J"/>
<dbReference type="PDBsum" id="9D5K"/>
<dbReference type="SMR" id="P78563"/>
<dbReference type="BioGRID" id="106618">
    <property type="interactions" value="510"/>
</dbReference>
<dbReference type="FunCoup" id="P78563">
    <property type="interactions" value="3802"/>
</dbReference>
<dbReference type="IntAct" id="P78563">
    <property type="interactions" value="212"/>
</dbReference>
<dbReference type="MINT" id="P78563"/>
<dbReference type="STRING" id="9606.ENSP00000353920"/>
<dbReference type="GlyGen" id="P78563">
    <property type="glycosylation" value="1 site"/>
</dbReference>
<dbReference type="iPTMnet" id="P78563"/>
<dbReference type="PhosphoSitePlus" id="P78563"/>
<dbReference type="SwissPalm" id="P78563"/>
<dbReference type="BioMuta" id="ADARB1"/>
<dbReference type="DMDM" id="2829669"/>
<dbReference type="jPOST" id="P78563"/>
<dbReference type="MassIVE" id="P78563"/>
<dbReference type="PaxDb" id="9606-ENSP00000353920"/>
<dbReference type="PeptideAtlas" id="P78563"/>
<dbReference type="ProteomicsDB" id="11761"/>
<dbReference type="ProteomicsDB" id="33889"/>
<dbReference type="ProteomicsDB" id="57656">
    <molecule id="P78563-1"/>
</dbReference>
<dbReference type="ProteomicsDB" id="57657">
    <molecule id="P78563-2"/>
</dbReference>
<dbReference type="ProteomicsDB" id="57658">
    <molecule id="P78563-3"/>
</dbReference>
<dbReference type="ProteomicsDB" id="57659">
    <molecule id="P78563-4"/>
</dbReference>
<dbReference type="Pumba" id="P78563"/>
<dbReference type="Antibodypedia" id="10404">
    <property type="antibodies" value="144 antibodies from 29 providers"/>
</dbReference>
<dbReference type="DNASU" id="104"/>
<dbReference type="Ensembl" id="ENST00000348831.9">
    <molecule id="P78563-2"/>
    <property type="protein sequence ID" value="ENSP00000015877.6"/>
    <property type="gene ID" value="ENSG00000197381.18"/>
</dbReference>
<dbReference type="Ensembl" id="ENST00000360697.4">
    <molecule id="P78563-1"/>
    <property type="protein sequence ID" value="ENSP00000353920.3"/>
    <property type="gene ID" value="ENSG00000197381.18"/>
</dbReference>
<dbReference type="Ensembl" id="ENST00000389861.7">
    <molecule id="P78563-2"/>
    <property type="protein sequence ID" value="ENSP00000516121.1"/>
    <property type="gene ID" value="ENSG00000197381.18"/>
</dbReference>
<dbReference type="Ensembl" id="ENST00000389863.8">
    <molecule id="P78563-3"/>
    <property type="protein sequence ID" value="ENSP00000374513.4"/>
    <property type="gene ID" value="ENSG00000197381.18"/>
</dbReference>
<dbReference type="Ensembl" id="ENST00000437626.5">
    <molecule id="P78563-1"/>
    <property type="protein sequence ID" value="ENSP00000414600.2"/>
    <property type="gene ID" value="ENSG00000197381.18"/>
</dbReference>
<dbReference type="Ensembl" id="ENST00000449478.2">
    <molecule id="P78563-1"/>
    <property type="protein sequence ID" value="ENSP00000387480.2"/>
    <property type="gene ID" value="ENSG00000197381.18"/>
</dbReference>
<dbReference type="Ensembl" id="ENST00000492414.5">
    <molecule id="P78563-2"/>
    <property type="protein sequence ID" value="ENSP00000436367.1"/>
    <property type="gene ID" value="ENSG00000197381.18"/>
</dbReference>
<dbReference type="Ensembl" id="ENST00000496664.5">
    <molecule id="P78563-1"/>
    <property type="protein sequence ID" value="ENSP00000435381.1"/>
    <property type="gene ID" value="ENSG00000197381.18"/>
</dbReference>
<dbReference type="GeneID" id="104"/>
<dbReference type="KEGG" id="hsa:104"/>
<dbReference type="MANE-Select" id="ENST00000348831.9">
    <molecule id="P78563-2"/>
    <property type="protein sequence ID" value="ENSP00000015877.6"/>
    <property type="RefSeq nucleotide sequence ID" value="NM_001112.4"/>
    <property type="RefSeq protein sequence ID" value="NP_001103.1"/>
</dbReference>
<dbReference type="UCSC" id="uc002zgr.3">
    <molecule id="P78563-1"/>
    <property type="organism name" value="human"/>
</dbReference>
<dbReference type="AGR" id="HGNC:226"/>
<dbReference type="CTD" id="104"/>
<dbReference type="DisGeNET" id="104"/>
<dbReference type="GeneCards" id="ADARB1"/>
<dbReference type="HGNC" id="HGNC:226">
    <property type="gene designation" value="ADARB1"/>
</dbReference>
<dbReference type="HPA" id="ENSG00000197381">
    <property type="expression patterns" value="Tissue enhanced (urinary)"/>
</dbReference>
<dbReference type="MalaCards" id="ADARB1"/>
<dbReference type="MIM" id="601218">
    <property type="type" value="gene"/>
</dbReference>
<dbReference type="MIM" id="618862">
    <property type="type" value="phenotype"/>
</dbReference>
<dbReference type="neXtProt" id="NX_P78563"/>
<dbReference type="OpenTargets" id="ENSG00000197381"/>
<dbReference type="PharmGKB" id="PA24556"/>
<dbReference type="VEuPathDB" id="HostDB:ENSG00000197381"/>
<dbReference type="eggNOG" id="KOG2777">
    <property type="taxonomic scope" value="Eukaryota"/>
</dbReference>
<dbReference type="GeneTree" id="ENSGT00940000155992"/>
<dbReference type="HOGENOM" id="CLU_005382_3_1_1"/>
<dbReference type="InParanoid" id="P78563"/>
<dbReference type="OMA" id="IFSPHES"/>
<dbReference type="OrthoDB" id="10268011at2759"/>
<dbReference type="PAN-GO" id="P78563">
    <property type="GO annotations" value="7 GO annotations based on evolutionary models"/>
</dbReference>
<dbReference type="PhylomeDB" id="P78563"/>
<dbReference type="TreeFam" id="TF315806"/>
<dbReference type="BRENDA" id="3.5.4.37">
    <property type="organism ID" value="2681"/>
</dbReference>
<dbReference type="PathwayCommons" id="P78563"/>
<dbReference type="Reactome" id="R-HSA-75102">
    <property type="pathway name" value="C6 deamination of adenosine"/>
</dbReference>
<dbReference type="Reactome" id="R-HSA-77042">
    <property type="pathway name" value="Formation of editosomes by ADAR proteins"/>
</dbReference>
<dbReference type="SignaLink" id="P78563"/>
<dbReference type="SIGNOR" id="P78563"/>
<dbReference type="BioGRID-ORCS" id="104">
    <property type="hits" value="8 hits in 1155 CRISPR screens"/>
</dbReference>
<dbReference type="CD-CODE" id="91857CE7">
    <property type="entry name" value="Nucleolus"/>
</dbReference>
<dbReference type="ChiTaRS" id="ADARB1">
    <property type="organism name" value="human"/>
</dbReference>
<dbReference type="EvolutionaryTrace" id="P78563"/>
<dbReference type="GeneWiki" id="ADARB1"/>
<dbReference type="GenomeRNAi" id="104"/>
<dbReference type="Pharos" id="P78563">
    <property type="development level" value="Tbio"/>
</dbReference>
<dbReference type="PRO" id="PR:P78563"/>
<dbReference type="Proteomes" id="UP000005640">
    <property type="component" value="Chromosome 21"/>
</dbReference>
<dbReference type="RNAct" id="P78563">
    <property type="molecule type" value="protein"/>
</dbReference>
<dbReference type="Bgee" id="ENSG00000197381">
    <property type="expression patterns" value="Expressed in blood vessel layer and 206 other cell types or tissues"/>
</dbReference>
<dbReference type="ExpressionAtlas" id="P78563">
    <property type="expression patterns" value="baseline and differential"/>
</dbReference>
<dbReference type="GO" id="GO:0005737">
    <property type="term" value="C:cytoplasm"/>
    <property type="evidence" value="ECO:0000318"/>
    <property type="project" value="GO_Central"/>
</dbReference>
<dbReference type="GO" id="GO:0005829">
    <property type="term" value="C:cytosol"/>
    <property type="evidence" value="ECO:0000314"/>
    <property type="project" value="HPA"/>
</dbReference>
<dbReference type="GO" id="GO:0005730">
    <property type="term" value="C:nucleolus"/>
    <property type="evidence" value="ECO:0000314"/>
    <property type="project" value="UniProtKB"/>
</dbReference>
<dbReference type="GO" id="GO:0005654">
    <property type="term" value="C:nucleoplasm"/>
    <property type="evidence" value="ECO:0000314"/>
    <property type="project" value="HPA"/>
</dbReference>
<dbReference type="GO" id="GO:0005634">
    <property type="term" value="C:nucleus"/>
    <property type="evidence" value="ECO:0000314"/>
    <property type="project" value="HGNC-UCL"/>
</dbReference>
<dbReference type="GO" id="GO:0045202">
    <property type="term" value="C:synapse"/>
    <property type="evidence" value="ECO:0007669"/>
    <property type="project" value="GOC"/>
</dbReference>
<dbReference type="GO" id="GO:0003726">
    <property type="term" value="F:double-stranded RNA adenosine deaminase activity"/>
    <property type="evidence" value="ECO:0000314"/>
    <property type="project" value="HGNC-UCL"/>
</dbReference>
<dbReference type="GO" id="GO:0003725">
    <property type="term" value="F:double-stranded RNA binding"/>
    <property type="evidence" value="ECO:0000314"/>
    <property type="project" value="HGNC-UCL"/>
</dbReference>
<dbReference type="GO" id="GO:0042802">
    <property type="term" value="F:identical protein binding"/>
    <property type="evidence" value="ECO:0000353"/>
    <property type="project" value="IntAct"/>
</dbReference>
<dbReference type="GO" id="GO:0046872">
    <property type="term" value="F:metal ion binding"/>
    <property type="evidence" value="ECO:0007669"/>
    <property type="project" value="UniProtKB-KW"/>
</dbReference>
<dbReference type="GO" id="GO:0003729">
    <property type="term" value="F:mRNA binding"/>
    <property type="evidence" value="ECO:0000304"/>
    <property type="project" value="BHF-UCL"/>
</dbReference>
<dbReference type="GO" id="GO:0003723">
    <property type="term" value="F:RNA binding"/>
    <property type="evidence" value="ECO:0000314"/>
    <property type="project" value="HGNC-UCL"/>
</dbReference>
<dbReference type="GO" id="GO:0008251">
    <property type="term" value="F:tRNA-specific adenosine deaminase activity"/>
    <property type="evidence" value="ECO:0000318"/>
    <property type="project" value="GO_Central"/>
</dbReference>
<dbReference type="GO" id="GO:0006382">
    <property type="term" value="P:adenosine to inosine editing"/>
    <property type="evidence" value="ECO:0000314"/>
    <property type="project" value="UniProtKB"/>
</dbReference>
<dbReference type="GO" id="GO:0016553">
    <property type="term" value="P:base conversion or substitution editing"/>
    <property type="evidence" value="ECO:0000314"/>
    <property type="project" value="HGNC-UCL"/>
</dbReference>
<dbReference type="GO" id="GO:0051607">
    <property type="term" value="P:defense response to virus"/>
    <property type="evidence" value="ECO:0007669"/>
    <property type="project" value="UniProtKB-KW"/>
</dbReference>
<dbReference type="GO" id="GO:0021610">
    <property type="term" value="P:facial nerve morphogenesis"/>
    <property type="evidence" value="ECO:0007669"/>
    <property type="project" value="Ensembl"/>
</dbReference>
<dbReference type="GO" id="GO:0021618">
    <property type="term" value="P:hypoglossal nerve morphogenesis"/>
    <property type="evidence" value="ECO:0007669"/>
    <property type="project" value="Ensembl"/>
</dbReference>
<dbReference type="GO" id="GO:0045087">
    <property type="term" value="P:innate immune response"/>
    <property type="evidence" value="ECO:0007669"/>
    <property type="project" value="UniProtKB-KW"/>
</dbReference>
<dbReference type="GO" id="GO:0060384">
    <property type="term" value="P:innervation"/>
    <property type="evidence" value="ECO:0007669"/>
    <property type="project" value="Ensembl"/>
</dbReference>
<dbReference type="GO" id="GO:0061744">
    <property type="term" value="P:motor behavior"/>
    <property type="evidence" value="ECO:0007669"/>
    <property type="project" value="Ensembl"/>
</dbReference>
<dbReference type="GO" id="GO:0097049">
    <property type="term" value="P:motor neuron apoptotic process"/>
    <property type="evidence" value="ECO:0007669"/>
    <property type="project" value="Ensembl"/>
</dbReference>
<dbReference type="GO" id="GO:0006397">
    <property type="term" value="P:mRNA processing"/>
    <property type="evidence" value="ECO:0007669"/>
    <property type="project" value="UniProtKB-KW"/>
</dbReference>
<dbReference type="GO" id="GO:0035264">
    <property type="term" value="P:multicellular organism growth"/>
    <property type="evidence" value="ECO:0007669"/>
    <property type="project" value="Ensembl"/>
</dbReference>
<dbReference type="GO" id="GO:0060415">
    <property type="term" value="P:muscle tissue morphogenesis"/>
    <property type="evidence" value="ECO:0007669"/>
    <property type="project" value="Ensembl"/>
</dbReference>
<dbReference type="GO" id="GO:0030336">
    <property type="term" value="P:negative regulation of cell migration"/>
    <property type="evidence" value="ECO:0000314"/>
    <property type="project" value="UniProtKB"/>
</dbReference>
<dbReference type="GO" id="GO:0008285">
    <property type="term" value="P:negative regulation of cell population proliferation"/>
    <property type="evidence" value="ECO:0000314"/>
    <property type="project" value="UniProtKB"/>
</dbReference>
<dbReference type="GO" id="GO:0044387">
    <property type="term" value="P:negative regulation of protein kinase activity by regulation of protein phosphorylation"/>
    <property type="evidence" value="ECO:0000314"/>
    <property type="project" value="UniProtKB"/>
</dbReference>
<dbReference type="GO" id="GO:0050884">
    <property type="term" value="P:neuromuscular process controlling posture"/>
    <property type="evidence" value="ECO:0007669"/>
    <property type="project" value="Ensembl"/>
</dbReference>
<dbReference type="GO" id="GO:0007274">
    <property type="term" value="P:neuromuscular synaptic transmission"/>
    <property type="evidence" value="ECO:0007669"/>
    <property type="project" value="Ensembl"/>
</dbReference>
<dbReference type="GO" id="GO:0045070">
    <property type="term" value="P:positive regulation of viral genome replication"/>
    <property type="evidence" value="ECO:0000315"/>
    <property type="project" value="UniProtKB"/>
</dbReference>
<dbReference type="GO" id="GO:0051726">
    <property type="term" value="P:regulation of cell cycle"/>
    <property type="evidence" value="ECO:0000314"/>
    <property type="project" value="UniProtKB"/>
</dbReference>
<dbReference type="GO" id="GO:0006396">
    <property type="term" value="P:RNA processing"/>
    <property type="evidence" value="ECO:0000314"/>
    <property type="project" value="HGNC-UCL"/>
</dbReference>
<dbReference type="GO" id="GO:0021965">
    <property type="term" value="P:spinal cord ventral commissure morphogenesis"/>
    <property type="evidence" value="ECO:0007669"/>
    <property type="project" value="Ensembl"/>
</dbReference>
<dbReference type="CDD" id="cd19895">
    <property type="entry name" value="DSRM_RED1_rpt1"/>
    <property type="match status" value="1"/>
</dbReference>
<dbReference type="CDD" id="cd19898">
    <property type="entry name" value="DSRM_RED1_rpt2"/>
    <property type="match status" value="1"/>
</dbReference>
<dbReference type="FunFam" id="3.30.160.20:FF:000009">
    <property type="entry name" value="Adenosine deaminase RNA-specific B2 (inactive)"/>
    <property type="match status" value="1"/>
</dbReference>
<dbReference type="FunFam" id="3.30.160.20:FF:000011">
    <property type="entry name" value="double-stranded RNA-specific editase 1 isoform X1"/>
    <property type="match status" value="1"/>
</dbReference>
<dbReference type="Gene3D" id="3.30.160.20">
    <property type="match status" value="2"/>
</dbReference>
<dbReference type="IDEAL" id="IID00604"/>
<dbReference type="InterPro" id="IPR002466">
    <property type="entry name" value="A_deamin"/>
</dbReference>
<dbReference type="InterPro" id="IPR044458">
    <property type="entry name" value="ADAR2_DSRM_1"/>
</dbReference>
<dbReference type="InterPro" id="IPR044459">
    <property type="entry name" value="ADAR2_DSRM_2"/>
</dbReference>
<dbReference type="InterPro" id="IPR014720">
    <property type="entry name" value="dsRBD_dom"/>
</dbReference>
<dbReference type="InterPro" id="IPR008996">
    <property type="entry name" value="IL1/FGF"/>
</dbReference>
<dbReference type="PANTHER" id="PTHR10910:SF58">
    <property type="entry name" value="DOUBLE-STRANDED RNA-SPECIFIC EDITASE 1"/>
    <property type="match status" value="1"/>
</dbReference>
<dbReference type="PANTHER" id="PTHR10910">
    <property type="entry name" value="EUKARYOTE SPECIFIC DSRNA BINDING PROTEIN"/>
    <property type="match status" value="1"/>
</dbReference>
<dbReference type="Pfam" id="PF02137">
    <property type="entry name" value="A_deamin"/>
    <property type="match status" value="1"/>
</dbReference>
<dbReference type="Pfam" id="PF00035">
    <property type="entry name" value="dsrm"/>
    <property type="match status" value="2"/>
</dbReference>
<dbReference type="SMART" id="SM00552">
    <property type="entry name" value="ADEAMc"/>
    <property type="match status" value="1"/>
</dbReference>
<dbReference type="SMART" id="SM00358">
    <property type="entry name" value="DSRM"/>
    <property type="match status" value="2"/>
</dbReference>
<dbReference type="SUPFAM" id="SSF50353">
    <property type="entry name" value="Cytokine"/>
    <property type="match status" value="1"/>
</dbReference>
<dbReference type="SUPFAM" id="SSF54768">
    <property type="entry name" value="dsRNA-binding domain-like"/>
    <property type="match status" value="2"/>
</dbReference>
<dbReference type="PROSITE" id="PS50141">
    <property type="entry name" value="A_DEAMIN_EDITASE"/>
    <property type="match status" value="1"/>
</dbReference>
<dbReference type="PROSITE" id="PS50137">
    <property type="entry name" value="DS_RBD"/>
    <property type="match status" value="2"/>
</dbReference>
<proteinExistence type="evidence at protein level"/>
<accession>P78563</accession>
<accession>A6NFK8</accession>
<accession>A6NJ84</accession>
<accession>C3TTQ1</accession>
<accession>C3TTQ2</accession>
<accession>C9JUP4</accession>
<accession>G5E9B4</accession>
<accession>O00395</accession>
<accession>O00465</accession>
<accession>O00691</accession>
<accession>O00692</accession>
<accession>P78555</accession>
<accession>Q4AE77</accession>
<accession>Q4AE79</accession>
<accession>Q6P0M9</accession>
<accession>Q8NFA1</accession>
<accession>Q8NFD1</accession>
<comment type="function">
    <text evidence="7 9 10">Catalyzes the hydrolytic deamination of adenosine to inosine in double-stranded RNA (dsRNA) referred to as A-to-I RNA editing. This may affect gene expression and function in a number of ways that include mRNA translation by changing codons and hence the amino acid sequence of proteins; pre-mRNA splicing by altering splice site recognition sequences; RNA stability by changing sequences involved in nuclease recognition; genetic stability in the case of RNA virus genomes by changing sequences during viral RNA replication; and RNA structure-dependent activities such as microRNA production or targeting or protein-RNA interactions. Can edit both viral and cellular RNAs and can edit RNAs at multiple sites (hyper-editing) or at specific sites (site-specific editing). Its cellular RNA substrates include: bladder cancer-associated protein (BLCAP), neurotransmitter receptors for glutamate (GRIA2 and GRIK2) and serotonin (HTR2C), GABA receptor (GABRA3) and potassium voltage-gated channel (KCNA1). Site-specific RNA editing of transcripts encoding these proteins results in amino acid substitutions which consequently alter their functional activities. Edits GRIA2 at both the Q/R and R/G sites efficiently but converts the adenosine in hotspot1 much less efficiently. Can exert a proviral effect towards human immunodeficiency virus type 1 (HIV-1) and enhances its replication via both an editing-dependent and editing-independent mechanism. The former involves editing of adenosines in the 5'UTR while the latter occurs via suppression of EIF2AK2/PKR activation and function. Can inhibit cell proliferation and migration and can stimulate exocytosis.</text>
</comment>
<comment type="function">
    <molecule>Isoform 1</molecule>
    <text evidence="12">Has a lower catalytic activity than isoform 2.</text>
</comment>
<comment type="function">
    <molecule>Isoform 2</molecule>
    <text evidence="12">Has a higher catalytic activity than isoform 1.</text>
</comment>
<comment type="catalytic activity">
    <reaction evidence="6 11 12">
        <text>adenosine in double-stranded RNA + H2O + H(+) = inosine in double-stranded RNA + NH4(+)</text>
        <dbReference type="Rhea" id="RHEA:10120"/>
        <dbReference type="Rhea" id="RHEA-COMP:13885"/>
        <dbReference type="Rhea" id="RHEA-COMP:13886"/>
        <dbReference type="ChEBI" id="CHEBI:15377"/>
        <dbReference type="ChEBI" id="CHEBI:15378"/>
        <dbReference type="ChEBI" id="CHEBI:28938"/>
        <dbReference type="ChEBI" id="CHEBI:74411"/>
        <dbReference type="ChEBI" id="CHEBI:82852"/>
        <dbReference type="EC" id="3.5.4.37"/>
    </reaction>
    <physiologicalReaction direction="left-to-right" evidence="11">
        <dbReference type="Rhea" id="RHEA:10121"/>
    </physiologicalReaction>
</comment>
<comment type="cofactor">
    <cofactor evidence="6">
        <name>1D-myo-inositol hexakisphosphate</name>
        <dbReference type="ChEBI" id="CHEBI:58130"/>
    </cofactor>
    <text evidence="6">Binds 1 myo-inositol hexakisphosphate (IP6) per subunit.</text>
</comment>
<comment type="subunit">
    <text evidence="6 7">Homodimer. Homodimerization is essential for its catalytic activity. Can form heterodimers with isoform 5 of ADAR/ADAR1.</text>
</comment>
<comment type="interaction">
    <interactant intactId="EBI-2967304">
        <id>P78563</id>
    </interactant>
    <interactant intactId="EBI-347804">
        <id>P68400</id>
        <label>CSNK2A1</label>
    </interactant>
    <organismsDiffer>false</organismsDiffer>
    <experiments>3</experiments>
</comment>
<comment type="interaction">
    <interactant intactId="EBI-2967304">
        <id>P78563</id>
    </interactant>
    <interactant intactId="EBI-852823">
        <id>P05412</id>
        <label>JUN</label>
    </interactant>
    <organismsDiffer>false</organismsDiffer>
    <experiments>3</experiments>
</comment>
<comment type="interaction">
    <interactant intactId="EBI-2967304">
        <id>P78563</id>
    </interactant>
    <interactant intactId="EBI-714158">
        <id>Q13526</id>
        <label>PIN1</label>
    </interactant>
    <organismsDiffer>false</organismsDiffer>
    <experiments>12</experiments>
</comment>
<comment type="interaction">
    <interactant intactId="EBI-2967304">
        <id>P78563</id>
    </interactant>
    <interactant intactId="EBI-743923">
        <id>O00308</id>
        <label>WWP2</label>
    </interactant>
    <organismsDiffer>false</organismsDiffer>
    <experiments>5</experiments>
</comment>
<comment type="interaction">
    <interactant intactId="EBI-2967304">
        <id>P78563</id>
    </interactant>
    <interactant intactId="EBI-25475856">
        <id>P0DTC9</id>
        <label>N</label>
    </interactant>
    <organismsDiffer>true</organismsDiffer>
    <experiments>4</experiments>
</comment>
<comment type="interaction">
    <interactant intactId="EBI-12002366">
        <id>P78563-4</id>
    </interactant>
    <interactant intactId="EBI-12002366">
        <id>P78563-4</id>
        <label>ADARB1</label>
    </interactant>
    <organismsDiffer>false</organismsDiffer>
    <experiments>3</experiments>
</comment>
<comment type="interaction">
    <interactant intactId="EBI-12002366">
        <id>P78563-4</id>
    </interactant>
    <interactant intactId="EBI-2339219">
        <id>Q08426</id>
        <label>EHHADH</label>
    </interactant>
    <organismsDiffer>false</organismsDiffer>
    <experiments>3</experiments>
</comment>
<comment type="interaction">
    <interactant intactId="EBI-12002366">
        <id>P78563-4</id>
    </interactant>
    <interactant intactId="EBI-640775">
        <id>P19525</id>
        <label>EIF2AK2</label>
    </interactant>
    <organismsDiffer>false</organismsDiffer>
    <experiments>3</experiments>
</comment>
<comment type="interaction">
    <interactant intactId="EBI-12002366">
        <id>P78563-4</id>
    </interactant>
    <interactant intactId="EBI-766011">
        <id>O15226</id>
        <label>NKRF</label>
    </interactant>
    <organismsDiffer>false</organismsDiffer>
    <experiments>3</experiments>
</comment>
<comment type="interaction">
    <interactant intactId="EBI-12002366">
        <id>P78563-4</id>
    </interactant>
    <interactant intactId="EBI-1052020">
        <id>Q8TCS8</id>
        <label>PNPT1</label>
    </interactant>
    <organismsDiffer>false</organismsDiffer>
    <experiments>3</experiments>
</comment>
<comment type="interaction">
    <interactant intactId="EBI-12002366">
        <id>P78563-4</id>
    </interactant>
    <interactant intactId="EBI-713955">
        <id>O75569</id>
        <label>PRKRA</label>
    </interactant>
    <organismsDiffer>false</organismsDiffer>
    <experiments>3</experiments>
</comment>
<comment type="interaction">
    <interactant intactId="EBI-12002366">
        <id>P78563-4</id>
    </interactant>
    <interactant intactId="EBI-358174">
        <id>O95793</id>
        <label>STAU1</label>
    </interactant>
    <organismsDiffer>false</organismsDiffer>
    <experiments>3</experiments>
</comment>
<comment type="interaction">
    <interactant intactId="EBI-12002366">
        <id>P78563-4</id>
    </interactant>
    <interactant intactId="EBI-3923644">
        <id>Q6ZVD7</id>
        <label>STOX1</label>
    </interactant>
    <organismsDiffer>false</organismsDiffer>
    <experiments>3</experiments>
</comment>
<comment type="interaction">
    <interactant intactId="EBI-12002366">
        <id>P78563-4</id>
    </interactant>
    <interactant intactId="EBI-740355">
        <id>Q96SI9</id>
        <label>STRBP</label>
    </interactant>
    <organismsDiffer>false</organismsDiffer>
    <experiments>3</experiments>
</comment>
<comment type="interaction">
    <interactant intactId="EBI-12002366">
        <id>P78563-4</id>
    </interactant>
    <interactant intactId="EBI-978581">
        <id>Q15633</id>
        <label>TARBP2</label>
    </interactant>
    <organismsDiffer>false</organismsDiffer>
    <experiments>3</experiments>
</comment>
<comment type="interaction">
    <interactant intactId="EBI-12002366">
        <id>P78563-4</id>
    </interactant>
    <interactant intactId="EBI-11955057">
        <id>Q8N8B7-2</id>
        <label>TCEANC</label>
    </interactant>
    <organismsDiffer>false</organismsDiffer>
    <experiments>3</experiments>
</comment>
<comment type="interaction">
    <interactant intactId="EBI-12002366">
        <id>P78563-4</id>
    </interactant>
    <interactant intactId="EBI-10180829">
        <id>Q7KZS0</id>
        <label>UBE2I</label>
    </interactant>
    <organismsDiffer>false</organismsDiffer>
    <experiments>3</experiments>
</comment>
<comment type="interaction">
    <interactant intactId="EBI-12002366">
        <id>P78563-4</id>
    </interactant>
    <interactant intactId="EBI-11529334">
        <id>Q9H898-2</id>
        <label>ZMAT4</label>
    </interactant>
    <organismsDiffer>false</organismsDiffer>
    <experiments>3</experiments>
</comment>
<comment type="interaction">
    <interactant intactId="EBI-12002366">
        <id>P78563-4</id>
    </interactant>
    <interactant intactId="EBI-2462313">
        <id>Q9UL40</id>
        <label>ZNF346</label>
    </interactant>
    <organismsDiffer>false</organismsDiffer>
    <experiments>3</experiments>
</comment>
<comment type="subcellular location">
    <subcellularLocation>
        <location evidence="11">Nucleus</location>
    </subcellularLocation>
    <subcellularLocation>
        <location evidence="11">Nucleus</location>
        <location evidence="11">Nucleolus</location>
    </subcellularLocation>
    <text evidence="22">Shuttles between nucleoli and the nucleoplasm.</text>
</comment>
<comment type="subcellular location">
    <molecule>Isoform 1</molecule>
    <subcellularLocation>
        <location evidence="11">Nucleus</location>
    </subcellularLocation>
    <subcellularLocation>
        <location evidence="11">Nucleus</location>
        <location evidence="11">Nucleolus</location>
    </subcellularLocation>
</comment>
<comment type="subcellular location">
    <molecule>Isoform 2</molecule>
    <subcellularLocation>
        <location evidence="11">Nucleus</location>
    </subcellularLocation>
    <subcellularLocation>
        <location evidence="11">Nucleus</location>
        <location evidence="11">Nucleolus</location>
    </subcellularLocation>
</comment>
<comment type="alternative products">
    <event type="alternative promoter"/>
    <event type="alternative splicing"/>
    <isoform>
        <id>P78563-1</id>
        <name>1</name>
        <name evidence="17">ADAR2b</name>
        <name evidence="17">ADAR2L</name>
        <name>DRADA2B</name>
        <name>RED1-L</name>
        <sequence type="displayed"/>
    </isoform>
    <isoform>
        <id>P78563-2</id>
        <name>2</name>
        <name evidence="17">ADAR2a</name>
        <name evidence="17">ADAR2S</name>
        <name>DRADA2A</name>
        <name>RED1-S</name>
        <sequence type="described" ref="VSP_000865"/>
    </isoform>
    <isoform>
        <id>P78563-3</id>
        <name>3</name>
        <name>DRADA2C</name>
        <sequence type="described" ref="VSP_000866"/>
    </isoform>
    <isoform>
        <id>P78563-4</id>
        <name>4</name>
        <sequence type="described" ref="VSP_019597 VSP_000865"/>
    </isoform>
    <isoform>
        <id>P78563-5</id>
        <name>5</name>
        <name>ADAR2R</name>
        <sequence type="described" ref="VSP_041421"/>
    </isoform>
    <isoform>
        <id>P78563-6</id>
        <name>6</name>
        <name>ADAR2d</name>
        <sequence type="described" ref="VSP_000865 VSP_000866"/>
    </isoform>
    <text>Additional isoforms seem to exist.</text>
</comment>
<comment type="tissue specificity">
    <text evidence="7 12">Highly expressed in brain and heart and at lower levels in placenta. Fair expression in lung, liver and kidney. Detected in brain, heart, kidney, lung and liver (at protein level).</text>
</comment>
<comment type="tissue specificity">
    <molecule>Isoform 5</molecule>
    <text evidence="8">Highly expressed in hippocampus and colon. Expressed in pediatric astrocytomas and the protein has a decreased RNA-editing activity. The decrease in RNA editing correlates with the grade of malignancy of the tumors, with the high grade tumors showing lower editing is seen.</text>
</comment>
<comment type="disease" evidence="11">
    <disease id="DI-05827">
        <name>Neurodevelopmental disorder with hypotonia, microcephaly, and seizures</name>
        <acronym>NEDHYMS</acronym>
        <description>An autosomal recessive neurodevelopmental disorder characterized by global developmental delay with axial hypotonia, inability to sit or walk, impaired intellectual development with absent language, and early-onset intractable seizures in most patients. Additional features include poor overall growth, microcephaly, dysmorphic features, poor eye contact due to cortical blindness, and non-specific brain abnormalities.</description>
        <dbReference type="MIM" id="618862"/>
    </disease>
    <text>The disease is caused by variants affecting the gene represented in this entry.</text>
</comment>
<comment type="miscellaneous">
    <molecule>Isoform 1</molecule>
    <text>Alu insert from position 465 to 505. May be produced at very low levels due to a premature stop codon in the mRNA, leading to nonsense-mediated mRNA decay.</text>
</comment>
<comment type="miscellaneous">
    <molecule>Isoform 5</molecule>
    <text evidence="8">Likely expressed from an alternative promoter. Contains a region highly similar to the so-called ssRNA-binding R-domain of ADARB2.</text>
</comment>
<comment type="sequence caution" evidence="21">
    <conflict type="erroneous initiation">
        <sequence resource="EMBL-CDS" id="ACN49027"/>
    </conflict>
    <text>Truncated N-terminus.</text>
</comment>
<protein>
    <recommendedName>
        <fullName evidence="21">Double-stranded RNA-specific editase 1</fullName>
        <ecNumber evidence="6 12">3.5.4.37</ecNumber>
    </recommendedName>
    <alternativeName>
        <fullName>RNA-editing deaminase 1</fullName>
    </alternativeName>
    <alternativeName>
        <fullName>RNA-editing enzyme 1</fullName>
    </alternativeName>
    <alternativeName>
        <fullName>dsRNA adenosine deaminase</fullName>
    </alternativeName>
</protein>
<gene>
    <name evidence="23" type="primary">ADARB1</name>
    <name evidence="17" type="synonym">ADAR2</name>
    <name type="synonym">DRADA2</name>
    <name type="synonym">RED1</name>
</gene>
<organism>
    <name type="scientific">Homo sapiens</name>
    <name type="common">Human</name>
    <dbReference type="NCBI Taxonomy" id="9606"/>
    <lineage>
        <taxon>Eukaryota</taxon>
        <taxon>Metazoa</taxon>
        <taxon>Chordata</taxon>
        <taxon>Craniata</taxon>
        <taxon>Vertebrata</taxon>
        <taxon>Euteleostomi</taxon>
        <taxon>Mammalia</taxon>
        <taxon>Eutheria</taxon>
        <taxon>Euarchontoglires</taxon>
        <taxon>Primates</taxon>
        <taxon>Haplorrhini</taxon>
        <taxon>Catarrhini</taxon>
        <taxon>Hominidae</taxon>
        <taxon>Homo</taxon>
    </lineage>
</organism>
<keyword id="KW-0002">3D-structure</keyword>
<keyword id="KW-0877">Alternative promoter usage</keyword>
<keyword id="KW-0025">Alternative splicing</keyword>
<keyword id="KW-0051">Antiviral defense</keyword>
<keyword id="KW-0225">Disease variant</keyword>
<keyword id="KW-0378">Hydrolase</keyword>
<keyword id="KW-0391">Immunity</keyword>
<keyword id="KW-0399">Innate immunity</keyword>
<keyword id="KW-0991">Intellectual disability</keyword>
<keyword id="KW-0479">Metal-binding</keyword>
<keyword id="KW-0507">mRNA processing</keyword>
<keyword id="KW-0539">Nucleus</keyword>
<keyword id="KW-0597">Phosphoprotein</keyword>
<keyword id="KW-1267">Proteomics identification</keyword>
<keyword id="KW-1185">Reference proteome</keyword>
<keyword id="KW-0677">Repeat</keyword>
<keyword id="KW-0694">RNA-binding</keyword>
<keyword id="KW-0862">Zinc</keyword>